<keyword id="KW-1003">Cell membrane</keyword>
<keyword id="KW-0175">Coiled coil</keyword>
<keyword id="KW-0963">Cytoplasm</keyword>
<keyword id="KW-0221">Differentiation</keyword>
<keyword id="KW-0344">Guanine-nucleotide releasing factor</keyword>
<keyword id="KW-0472">Membrane</keyword>
<keyword id="KW-0479">Metal-binding</keyword>
<keyword id="KW-0597">Phosphoprotein</keyword>
<keyword id="KW-1185">Reference proteome</keyword>
<keyword id="KW-0694">RNA-binding</keyword>
<keyword id="KW-0862">Zinc</keyword>
<keyword id="KW-0863">Zinc-finger</keyword>
<sequence length="1700" mass="190757">MELSCSEVPLYGQRTVYAKFGKNVYLPEDAEFYFIYDGSHQRHVVIADRVEDNVLQSIIPGHWLQETVMVSVCLCSEGYSPVTMGSGSVTYVDNMACRLARLLVTQADRLTPCSHQTLLTPFALTAEALPALDEELVLALTQLELPLGWTVLGNSSLEVCLHRESLLHLAVRWALPKLFHFLLCLPGGVKALELPNEEATTPLDLALHGGHSMLVEDISNFQGRRSPGFSRLRLNEDATLQFDRSSETLTLTVNHTAEHLLEADIKLFRKYFWDRAFLVKALDQEAKTERATMPSGAAETEEEVRNLESGRSPSEEEEDGQLVKSQADGPSEQEDQDRLVLDHSFDGLKKSKHAPASLAAGQLSDVPNGGDEVYANCMVIDQVGDLDINYINIEGLSTHTSPESMRSTLGPQACKHILPPDTSPCGHLLCEDSDRTLDAAASQSCMSPPSSHTSNLNLSFGLHGFVKEQSHLKKRSSSLDALVADSEEEGRSEPPICYAVGSQSSPRTGLPGGDELDSFDANTEPDCNISRTESLSLSSTLHSKESLLSGIRSRSYSCSSPKISSGKSRLVRDFTVCSSSEEQRSYSFQEPPGEKRIQEEEWDDYIIPAKAESEKHKVSRTFSFLMNRMTSPRNKSKMKNKDTKDKEKLNRHQFVPGTFSGVLQCSGCDKTLLGKESLQCANCKANTHKGCKDTVPPCTKKFQDKYNKNKPQTILGSSSVRDVPPPGLSLHPSPSMPIGLPAGRKETAGQAHPLSRSVPGTTLESFRRAVTSLESEGDSNSWRSRSHSDELFQSMGSSPSTESFMMEDVVDSSLWSELSSDAQEFEAESWSLVVDPSFCSRQEKDVIKRQDVIFELMQTEVHHIQTLLIMSEVFRKGMKEELQLDHSTVDRIFPCLDELLETHKHFFFSMKERRQESCTGNDRNFVINQIGDILVQQFSEENASKMKRIYGDFCSHHKEAMSLFKELQQNKKFQNFIKIRNSNLLARRRGIPECILLVTQRITKYPVLVERILQYTKERTEEHRDLCRALGLIKDMIAAVDLKVSEYEKNQKWLEILNKIENKTYTKLKNGHVFRKQALMSQERALLHDGLVYWKTATGRFKDILALLLTDVLLFLQEKDQKYIFAAVDQKPSVISLQKLIAREVANEERGMFLISASSAGPEMYEIHTSSKEERNNWMRRIQQAVESCPEEEGGRTSESDEERRKADARVAKIQQCQEILSNQDQQICTYLEEKLHIYAELGELSGFEDVHLEPHLLIKPDPGEPPQAASLLAAALREAESLQVAVKASKLADVSQPSEEGPGGAVLADTLSAQDAPASPTAFTEGTEGRGCWDVDPRLQGVVTDLAVSDAGEKVEYRSFSGSSQSEIIQAIQNLTRLLYSLQAALTIQDSHIEIHKLVLQQQESLAPSHSFRGGPLQDQEKSRYLEKHREELANIHKLQYQFQQEQRRWHRTCDQQQREQEAQESWLQARERECQSQEELLLRHRSELDHQLQEYQQNLERLREGQRMVERERQRMRDQQGLLGHCKHSRQRSLPAVFSPGSKEVTELNRAESLCHEKSFFLNDAFTHMSLNTSNKPNPSGAPWDAHPPGGSHLDLARTSDSQIEVKMDVSQPSDVNSELWTTGLGPQRPARQESIKDSCKNVADLNSFQTESPDPQDSNQRGPQPQTLITEAKLTPPMAAGHGGDAGDGAEENIVYL</sequence>
<comment type="function">
    <text evidence="9 10">Functions as a RHOA-specific guanine nucleotide exchange factor regulating signaling pathways downstream of integrins and growth factor receptors. Functions in axonal branching, synapse formation and dendritic morphogenesis. Also functions in focal adhesion formation, cell motility and B-lymphocytes activation. May regulate NEFL expression and aggregation and play a role in apoptosis.</text>
</comment>
<comment type="subunit">
    <text evidence="1">Homooligomer; forms cytoplasmic aggregates. Forms a complex with MAPK8 and MAPK8IP1. Interacts with RHOA. Interacts with microtubules. Interacts with YWHAE and YWHAH. Interacts with PTK2/FAK1. Interacts with NEFL. Interacts with CTNND2; prevents interaction with RHOA (By similarity).</text>
</comment>
<comment type="subcellular location">
    <subcellularLocation>
        <location evidence="1">Cytoplasm</location>
    </subcellularLocation>
    <subcellularLocation>
        <location evidence="1">Cell membrane</location>
    </subcellularLocation>
    <text evidence="1">Colocalizes with the microtubule radial and cortical systems.</text>
</comment>
<comment type="PTM">
    <text evidence="1">Phosphorylated on tyrosine upon stimulation of cells by laminin.</text>
</comment>
<proteinExistence type="evidence at protein level"/>
<dbReference type="EMBL" id="AABR03012977">
    <property type="status" value="NOT_ANNOTATED_CDS"/>
    <property type="molecule type" value="Genomic_DNA"/>
</dbReference>
<dbReference type="EMBL" id="AABR03013324">
    <property type="status" value="NOT_ANNOTATED_CDS"/>
    <property type="molecule type" value="Genomic_DNA"/>
</dbReference>
<dbReference type="EMBL" id="AABR03013680">
    <property type="status" value="NOT_ANNOTATED_CDS"/>
    <property type="molecule type" value="Genomic_DNA"/>
</dbReference>
<dbReference type="EMBL" id="AABR03015604">
    <property type="status" value="NOT_ANNOTATED_CDS"/>
    <property type="molecule type" value="Genomic_DNA"/>
</dbReference>
<dbReference type="EMBL" id="AABR03016111">
    <property type="status" value="NOT_ANNOTATED_CDS"/>
    <property type="molecule type" value="Genomic_DNA"/>
</dbReference>
<dbReference type="EMBL" id="AABR03017173">
    <property type="status" value="NOT_ANNOTATED_CDS"/>
    <property type="molecule type" value="Genomic_DNA"/>
</dbReference>
<dbReference type="EMBL" id="AABR03017199">
    <property type="status" value="NOT_ANNOTATED_CDS"/>
    <property type="molecule type" value="Genomic_DNA"/>
</dbReference>
<dbReference type="EMBL" id="AABR03018551">
    <property type="status" value="NOT_ANNOTATED_CDS"/>
    <property type="molecule type" value="Genomic_DNA"/>
</dbReference>
<dbReference type="EMBL" id="AABR03019008">
    <property type="status" value="NOT_ANNOTATED_CDS"/>
    <property type="molecule type" value="Genomic_DNA"/>
</dbReference>
<dbReference type="EMBL" id="AABR03021286">
    <property type="status" value="NOT_ANNOTATED_CDS"/>
    <property type="molecule type" value="Genomic_DNA"/>
</dbReference>
<dbReference type="EMBL" id="AABR03022481">
    <property type="status" value="NOT_ANNOTATED_CDS"/>
    <property type="molecule type" value="Genomic_DNA"/>
</dbReference>
<dbReference type="RefSeq" id="NP_001401994.1">
    <property type="nucleotide sequence ID" value="NM_001415065.1"/>
</dbReference>
<dbReference type="RefSeq" id="XP_008758898.1">
    <property type="nucleotide sequence ID" value="XM_008760676.1"/>
</dbReference>
<dbReference type="SMR" id="P0C6P5"/>
<dbReference type="FunCoup" id="P0C6P5">
    <property type="interactions" value="868"/>
</dbReference>
<dbReference type="STRING" id="10116.ENSRNOP00000059196"/>
<dbReference type="iPTMnet" id="P0C6P5"/>
<dbReference type="PhosphoSitePlus" id="P0C6P5"/>
<dbReference type="jPOST" id="P0C6P5"/>
<dbReference type="PaxDb" id="10116-ENSRNOP00000059196"/>
<dbReference type="GeneID" id="361882"/>
<dbReference type="UCSC" id="RGD:1307061">
    <property type="organism name" value="rat"/>
</dbReference>
<dbReference type="AGR" id="RGD:1307061"/>
<dbReference type="RGD" id="1307061">
    <property type="gene designation" value="Arhgef28"/>
</dbReference>
<dbReference type="VEuPathDB" id="HostDB:ENSRNOG00000016544"/>
<dbReference type="eggNOG" id="KOG3519">
    <property type="taxonomic scope" value="Eukaryota"/>
</dbReference>
<dbReference type="eggNOG" id="KOG3520">
    <property type="taxonomic scope" value="Eukaryota"/>
</dbReference>
<dbReference type="HOGENOM" id="CLU_002466_2_1_1"/>
<dbReference type="InParanoid" id="P0C6P5"/>
<dbReference type="PhylomeDB" id="P0C6P5"/>
<dbReference type="TreeFam" id="TF334740"/>
<dbReference type="Reactome" id="R-RNO-3928662">
    <property type="pathway name" value="EPHB-mediated forward signaling"/>
</dbReference>
<dbReference type="Reactome" id="R-RNO-8980692">
    <property type="pathway name" value="RHOA GTPase cycle"/>
</dbReference>
<dbReference type="Reactome" id="R-RNO-9013026">
    <property type="pathway name" value="RHOB GTPase cycle"/>
</dbReference>
<dbReference type="PRO" id="PR:P0C6P5"/>
<dbReference type="Proteomes" id="UP000002494">
    <property type="component" value="Chromosome 2"/>
</dbReference>
<dbReference type="Bgee" id="ENSRNOG00000016544">
    <property type="expression patterns" value="Expressed in kidney and 18 other cell types or tissues"/>
</dbReference>
<dbReference type="GO" id="GO:0005737">
    <property type="term" value="C:cytoplasm"/>
    <property type="evidence" value="ECO:0007669"/>
    <property type="project" value="UniProtKB-SubCell"/>
</dbReference>
<dbReference type="GO" id="GO:0005886">
    <property type="term" value="C:plasma membrane"/>
    <property type="evidence" value="ECO:0007669"/>
    <property type="project" value="UniProtKB-SubCell"/>
</dbReference>
<dbReference type="GO" id="GO:0005085">
    <property type="term" value="F:guanyl-nucleotide exchange factor activity"/>
    <property type="evidence" value="ECO:0000266"/>
    <property type="project" value="RGD"/>
</dbReference>
<dbReference type="GO" id="GO:0003723">
    <property type="term" value="F:RNA binding"/>
    <property type="evidence" value="ECO:0007669"/>
    <property type="project" value="UniProtKB-KW"/>
</dbReference>
<dbReference type="GO" id="GO:0008270">
    <property type="term" value="F:zinc ion binding"/>
    <property type="evidence" value="ECO:0007669"/>
    <property type="project" value="UniProtKB-KW"/>
</dbReference>
<dbReference type="GO" id="GO:0000902">
    <property type="term" value="P:cell morphogenesis"/>
    <property type="evidence" value="ECO:0000318"/>
    <property type="project" value="GO_Central"/>
</dbReference>
<dbReference type="GO" id="GO:0021955">
    <property type="term" value="P:central nervous system neuron axonogenesis"/>
    <property type="evidence" value="ECO:0000266"/>
    <property type="project" value="RGD"/>
</dbReference>
<dbReference type="GO" id="GO:0060052">
    <property type="term" value="P:neurofilament cytoskeleton organization"/>
    <property type="evidence" value="ECO:0000266"/>
    <property type="project" value="RGD"/>
</dbReference>
<dbReference type="GO" id="GO:0035023">
    <property type="term" value="P:regulation of Rho protein signal transduction"/>
    <property type="evidence" value="ECO:0000318"/>
    <property type="project" value="GO_Central"/>
</dbReference>
<dbReference type="CDD" id="cd20876">
    <property type="entry name" value="C1_p190RhoGEF"/>
    <property type="match status" value="1"/>
</dbReference>
<dbReference type="CDD" id="cd14680">
    <property type="entry name" value="PH_p190RhoGEF"/>
    <property type="match status" value="1"/>
</dbReference>
<dbReference type="CDD" id="cd00160">
    <property type="entry name" value="RhoGEF"/>
    <property type="match status" value="1"/>
</dbReference>
<dbReference type="FunFam" id="1.20.900.10:FF:000004">
    <property type="entry name" value="Rho guanine nucleotide exchange factor 2"/>
    <property type="match status" value="1"/>
</dbReference>
<dbReference type="FunFam" id="2.30.29.30:FF:000021">
    <property type="entry name" value="Rho guanine nucleotide exchange factor 2"/>
    <property type="match status" value="1"/>
</dbReference>
<dbReference type="FunFam" id="3.30.60.20:FF:000050">
    <property type="entry name" value="Rho guanine nucleotide exchange factor 28"/>
    <property type="match status" value="1"/>
</dbReference>
<dbReference type="Gene3D" id="3.30.60.20">
    <property type="match status" value="1"/>
</dbReference>
<dbReference type="Gene3D" id="1.20.900.10">
    <property type="entry name" value="Dbl homology (DH) domain"/>
    <property type="match status" value="1"/>
</dbReference>
<dbReference type="Gene3D" id="2.30.29.30">
    <property type="entry name" value="Pleckstrin-homology domain (PH domain)/Phosphotyrosine-binding domain (PTB)"/>
    <property type="match status" value="1"/>
</dbReference>
<dbReference type="InterPro" id="IPR037819">
    <property type="entry name" value="ARHGEF28_PH"/>
</dbReference>
<dbReference type="InterPro" id="IPR046349">
    <property type="entry name" value="C1-like_sf"/>
</dbReference>
<dbReference type="InterPro" id="IPR035899">
    <property type="entry name" value="DBL_dom_sf"/>
</dbReference>
<dbReference type="InterPro" id="IPR000219">
    <property type="entry name" value="DH_dom"/>
</dbReference>
<dbReference type="InterPro" id="IPR002219">
    <property type="entry name" value="PE/DAG-bd"/>
</dbReference>
<dbReference type="InterPro" id="IPR011993">
    <property type="entry name" value="PH-like_dom_sf"/>
</dbReference>
<dbReference type="InterPro" id="IPR041020">
    <property type="entry name" value="PH_16"/>
</dbReference>
<dbReference type="InterPro" id="IPR001849">
    <property type="entry name" value="PH_domain"/>
</dbReference>
<dbReference type="InterPro" id="IPR051632">
    <property type="entry name" value="Rho_GEF"/>
</dbReference>
<dbReference type="PANTHER" id="PTHR13944">
    <property type="entry name" value="AGAP007712-PA"/>
    <property type="match status" value="1"/>
</dbReference>
<dbReference type="PANTHER" id="PTHR13944:SF22">
    <property type="entry name" value="RHO GUANINE NUCLEOTIDE EXCHANGE FACTOR 28"/>
    <property type="match status" value="1"/>
</dbReference>
<dbReference type="Pfam" id="PF00130">
    <property type="entry name" value="C1_1"/>
    <property type="match status" value="1"/>
</dbReference>
<dbReference type="Pfam" id="PF17838">
    <property type="entry name" value="PH_16"/>
    <property type="match status" value="1"/>
</dbReference>
<dbReference type="Pfam" id="PF00621">
    <property type="entry name" value="RhoGEF"/>
    <property type="match status" value="1"/>
</dbReference>
<dbReference type="SMART" id="SM00109">
    <property type="entry name" value="C1"/>
    <property type="match status" value="1"/>
</dbReference>
<dbReference type="SMART" id="SM00233">
    <property type="entry name" value="PH"/>
    <property type="match status" value="1"/>
</dbReference>
<dbReference type="SMART" id="SM00325">
    <property type="entry name" value="RhoGEF"/>
    <property type="match status" value="1"/>
</dbReference>
<dbReference type="SUPFAM" id="SSF57889">
    <property type="entry name" value="Cysteine-rich domain"/>
    <property type="match status" value="1"/>
</dbReference>
<dbReference type="SUPFAM" id="SSF48065">
    <property type="entry name" value="DBL homology domain (DH-domain)"/>
    <property type="match status" value="1"/>
</dbReference>
<dbReference type="SUPFAM" id="SSF50729">
    <property type="entry name" value="PH domain-like"/>
    <property type="match status" value="1"/>
</dbReference>
<dbReference type="PROSITE" id="PS50010">
    <property type="entry name" value="DH_2"/>
    <property type="match status" value="1"/>
</dbReference>
<dbReference type="PROSITE" id="PS50003">
    <property type="entry name" value="PH_DOMAIN"/>
    <property type="match status" value="1"/>
</dbReference>
<dbReference type="PROSITE" id="PS00479">
    <property type="entry name" value="ZF_DAG_PE_1"/>
    <property type="match status" value="1"/>
</dbReference>
<dbReference type="PROSITE" id="PS50081">
    <property type="entry name" value="ZF_DAG_PE_2"/>
    <property type="match status" value="1"/>
</dbReference>
<name>ARG28_RAT</name>
<reference key="1">
    <citation type="journal article" date="2004" name="Nature">
        <title>Genome sequence of the Brown Norway rat yields insights into mammalian evolution.</title>
        <authorList>
            <person name="Gibbs R.A."/>
            <person name="Weinstock G.M."/>
            <person name="Metzker M.L."/>
            <person name="Muzny D.M."/>
            <person name="Sodergren E.J."/>
            <person name="Scherer S."/>
            <person name="Scott G."/>
            <person name="Steffen D."/>
            <person name="Worley K.C."/>
            <person name="Burch P.E."/>
            <person name="Okwuonu G."/>
            <person name="Hines S."/>
            <person name="Lewis L."/>
            <person name="Deramo C."/>
            <person name="Delgado O."/>
            <person name="Dugan-Rocha S."/>
            <person name="Miner G."/>
            <person name="Morgan M."/>
            <person name="Hawes A."/>
            <person name="Gill R."/>
            <person name="Holt R.A."/>
            <person name="Adams M.D."/>
            <person name="Amanatides P.G."/>
            <person name="Baden-Tillson H."/>
            <person name="Barnstead M."/>
            <person name="Chin S."/>
            <person name="Evans C.A."/>
            <person name="Ferriera S."/>
            <person name="Fosler C."/>
            <person name="Glodek A."/>
            <person name="Gu Z."/>
            <person name="Jennings D."/>
            <person name="Kraft C.L."/>
            <person name="Nguyen T."/>
            <person name="Pfannkoch C.M."/>
            <person name="Sitter C."/>
            <person name="Sutton G.G."/>
            <person name="Venter J.C."/>
            <person name="Woodage T."/>
            <person name="Smith D."/>
            <person name="Lee H.-M."/>
            <person name="Gustafson E."/>
            <person name="Cahill P."/>
            <person name="Kana A."/>
            <person name="Doucette-Stamm L."/>
            <person name="Weinstock K."/>
            <person name="Fechtel K."/>
            <person name="Weiss R.B."/>
            <person name="Dunn D.M."/>
            <person name="Green E.D."/>
            <person name="Blakesley R.W."/>
            <person name="Bouffard G.G."/>
            <person name="De Jong P.J."/>
            <person name="Osoegawa K."/>
            <person name="Zhu B."/>
            <person name="Marra M."/>
            <person name="Schein J."/>
            <person name="Bosdet I."/>
            <person name="Fjell C."/>
            <person name="Jones S."/>
            <person name="Krzywinski M."/>
            <person name="Mathewson C."/>
            <person name="Siddiqui A."/>
            <person name="Wye N."/>
            <person name="McPherson J."/>
            <person name="Zhao S."/>
            <person name="Fraser C.M."/>
            <person name="Shetty J."/>
            <person name="Shatsman S."/>
            <person name="Geer K."/>
            <person name="Chen Y."/>
            <person name="Abramzon S."/>
            <person name="Nierman W.C."/>
            <person name="Havlak P.H."/>
            <person name="Chen R."/>
            <person name="Durbin K.J."/>
            <person name="Egan A."/>
            <person name="Ren Y."/>
            <person name="Song X.-Z."/>
            <person name="Li B."/>
            <person name="Liu Y."/>
            <person name="Qin X."/>
            <person name="Cawley S."/>
            <person name="Cooney A.J."/>
            <person name="D'Souza L.M."/>
            <person name="Martin K."/>
            <person name="Wu J.Q."/>
            <person name="Gonzalez-Garay M.L."/>
            <person name="Jackson A.R."/>
            <person name="Kalafus K.J."/>
            <person name="McLeod M.P."/>
            <person name="Milosavljevic A."/>
            <person name="Virk D."/>
            <person name="Volkov A."/>
            <person name="Wheeler D.A."/>
            <person name="Zhang Z."/>
            <person name="Bailey J.A."/>
            <person name="Eichler E.E."/>
            <person name="Tuzun E."/>
            <person name="Birney E."/>
            <person name="Mongin E."/>
            <person name="Ureta-Vidal A."/>
            <person name="Woodwark C."/>
            <person name="Zdobnov E."/>
            <person name="Bork P."/>
            <person name="Suyama M."/>
            <person name="Torrents D."/>
            <person name="Alexandersson M."/>
            <person name="Trask B.J."/>
            <person name="Young J.M."/>
            <person name="Huang H."/>
            <person name="Wang H."/>
            <person name="Xing H."/>
            <person name="Daniels S."/>
            <person name="Gietzen D."/>
            <person name="Schmidt J."/>
            <person name="Stevens K."/>
            <person name="Vitt U."/>
            <person name="Wingrove J."/>
            <person name="Camara F."/>
            <person name="Mar Alba M."/>
            <person name="Abril J.F."/>
            <person name="Guigo R."/>
            <person name="Smit A."/>
            <person name="Dubchak I."/>
            <person name="Rubin E.M."/>
            <person name="Couronne O."/>
            <person name="Poliakov A."/>
            <person name="Huebner N."/>
            <person name="Ganten D."/>
            <person name="Goesele C."/>
            <person name="Hummel O."/>
            <person name="Kreitler T."/>
            <person name="Lee Y.-A."/>
            <person name="Monti J."/>
            <person name="Schulz H."/>
            <person name="Zimdahl H."/>
            <person name="Himmelbauer H."/>
            <person name="Lehrach H."/>
            <person name="Jacob H.J."/>
            <person name="Bromberg S."/>
            <person name="Gullings-Handley J."/>
            <person name="Jensen-Seaman M.I."/>
            <person name="Kwitek A.E."/>
            <person name="Lazar J."/>
            <person name="Pasko D."/>
            <person name="Tonellato P.J."/>
            <person name="Twigger S."/>
            <person name="Ponting C.P."/>
            <person name="Duarte J.M."/>
            <person name="Rice S."/>
            <person name="Goodstadt L."/>
            <person name="Beatson S.A."/>
            <person name="Emes R.D."/>
            <person name="Winter E.E."/>
            <person name="Webber C."/>
            <person name="Brandt P."/>
            <person name="Nyakatura G."/>
            <person name="Adetobi M."/>
            <person name="Chiaromonte F."/>
            <person name="Elnitski L."/>
            <person name="Eswara P."/>
            <person name="Hardison R.C."/>
            <person name="Hou M."/>
            <person name="Kolbe D."/>
            <person name="Makova K."/>
            <person name="Miller W."/>
            <person name="Nekrutenko A."/>
            <person name="Riemer C."/>
            <person name="Schwartz S."/>
            <person name="Taylor J."/>
            <person name="Yang S."/>
            <person name="Zhang Y."/>
            <person name="Lindpaintner K."/>
            <person name="Andrews T.D."/>
            <person name="Caccamo M."/>
            <person name="Clamp M."/>
            <person name="Clarke L."/>
            <person name="Curwen V."/>
            <person name="Durbin R.M."/>
            <person name="Eyras E."/>
            <person name="Searle S.M."/>
            <person name="Cooper G.M."/>
            <person name="Batzoglou S."/>
            <person name="Brudno M."/>
            <person name="Sidow A."/>
            <person name="Stone E.A."/>
            <person name="Payseur B.A."/>
            <person name="Bourque G."/>
            <person name="Lopez-Otin C."/>
            <person name="Puente X.S."/>
            <person name="Chakrabarti K."/>
            <person name="Chatterji S."/>
            <person name="Dewey C."/>
            <person name="Pachter L."/>
            <person name="Bray N."/>
            <person name="Yap V.B."/>
            <person name="Caspi A."/>
            <person name="Tesler G."/>
            <person name="Pevzner P.A."/>
            <person name="Haussler D."/>
            <person name="Roskin K.M."/>
            <person name="Baertsch R."/>
            <person name="Clawson H."/>
            <person name="Furey T.S."/>
            <person name="Hinrichs A.S."/>
            <person name="Karolchik D."/>
            <person name="Kent W.J."/>
            <person name="Rosenbloom K.R."/>
            <person name="Trumbower H."/>
            <person name="Weirauch M."/>
            <person name="Cooper D.N."/>
            <person name="Stenson P.D."/>
            <person name="Ma B."/>
            <person name="Brent M."/>
            <person name="Arumugam M."/>
            <person name="Shteynberg D."/>
            <person name="Copley R.R."/>
            <person name="Taylor M.S."/>
            <person name="Riethman H."/>
            <person name="Mudunuri U."/>
            <person name="Peterson J."/>
            <person name="Guyer M."/>
            <person name="Felsenfeld A."/>
            <person name="Old S."/>
            <person name="Mockrin S."/>
            <person name="Collins F.S."/>
        </authorList>
    </citation>
    <scope>NUCLEOTIDE SEQUENCE [LARGE SCALE GENOMIC DNA]</scope>
    <source>
        <strain>Brown Norway</strain>
    </source>
</reference>
<reference key="2">
    <citation type="journal article" date="2001" name="J. Biol. Chem.">
        <title>p190RhoGEF Binds to a destabilizing element in the 3' untranslated region of light neurofilament subunit mRNA and alters the stability of the transcript.</title>
        <authorList>
            <person name="Canete-Soler R."/>
            <person name="Wu J."/>
            <person name="Zhai J."/>
            <person name="Shamim M."/>
            <person name="Schlaepfer W.W."/>
        </authorList>
    </citation>
    <scope>FUNCTION IN NEFL EXPRESSION</scope>
    <scope>RNA-BINDING</scope>
</reference>
<reference key="3">
    <citation type="journal article" date="2002" name="J. Biol. Chem.">
        <title>Binding of p190RhoGEF to a destabilizing element on the light neurofilament mRNA is competed by BC1 RNA.</title>
        <authorList>
            <person name="Ge W.-W."/>
            <person name="Wu J."/>
            <person name="Zhai J."/>
            <person name="Nie Z."/>
            <person name="Lin H."/>
            <person name="Schlaepfer W.W."/>
            <person name="Canete-Soler R."/>
        </authorList>
    </citation>
    <scope>FUNCTION</scope>
    <scope>RNA-BINDING</scope>
</reference>
<reference key="4">
    <citation type="journal article" date="2003" name="Brain Res. Mol. Brain Res.">
        <title>Cytoplasmic retention sites in p190RhoGEF confer anti-apoptotic activity to an EGFP-tagged protein.</title>
        <authorList>
            <person name="Wu J."/>
            <person name="Zhai J."/>
            <person name="Lin H."/>
            <person name="Nie Z."/>
            <person name="Ge W.-W."/>
            <person name="Garcia-Bermejo L."/>
            <person name="Muschel R.J."/>
            <person name="Schlaepfer W.W."/>
            <person name="Canete-Soler R."/>
        </authorList>
    </citation>
    <scope>OLIGOMERIZATION</scope>
    <scope>IDENTIFICATION IN A COMPLEX WITH MAPK8 AND MAPK8IP1</scope>
</reference>
<reference key="5">
    <citation type="journal article" date="2003" name="J. Biol. Chem.">
        <title>Direct interaction of focal adhesion kinase with p190RhoGEF.</title>
        <authorList>
            <person name="Zhai J."/>
            <person name="Lin H."/>
            <person name="Nie Z."/>
            <person name="Wu J."/>
            <person name="Canete-Soler R."/>
            <person name="Schlaepfer W.W."/>
            <person name="Schlaepfer D.D."/>
        </authorList>
    </citation>
    <scope>INTERACTION WITH PTK2/FAK1</scope>
</reference>
<reference key="6">
    <citation type="journal article" date="2012" name="Nat. Commun.">
        <title>Quantitative maps of protein phosphorylation sites across 14 different rat organs and tissues.</title>
        <authorList>
            <person name="Lundby A."/>
            <person name="Secher A."/>
            <person name="Lage K."/>
            <person name="Nordsborg N.B."/>
            <person name="Dmytriyev A."/>
            <person name="Lundby C."/>
            <person name="Olsen J.V."/>
        </authorList>
    </citation>
    <scope>PHOSPHORYLATION [LARGE SCALE ANALYSIS] AT SER-312; SER-314 AND SER-478</scope>
    <scope>IDENTIFICATION BY MASS SPECTROMETRY [LARGE SCALE ANALYSIS]</scope>
</reference>
<protein>
    <recommendedName>
        <fullName>Rho guanine nucleotide exchange factor 28</fullName>
    </recommendedName>
    <alternativeName>
        <fullName>190 kDa guanine nucleotide exchange factor</fullName>
        <shortName>p190-RhoGEF</shortName>
        <shortName>p190RhoGEF</shortName>
    </alternativeName>
    <alternativeName>
        <fullName>Rho guanine nucleotide exchange factor</fullName>
    </alternativeName>
</protein>
<organism>
    <name type="scientific">Rattus norvegicus</name>
    <name type="common">Rat</name>
    <dbReference type="NCBI Taxonomy" id="10116"/>
    <lineage>
        <taxon>Eukaryota</taxon>
        <taxon>Metazoa</taxon>
        <taxon>Chordata</taxon>
        <taxon>Craniata</taxon>
        <taxon>Vertebrata</taxon>
        <taxon>Euteleostomi</taxon>
        <taxon>Mammalia</taxon>
        <taxon>Eutheria</taxon>
        <taxon>Euarchontoglires</taxon>
        <taxon>Glires</taxon>
        <taxon>Rodentia</taxon>
        <taxon>Myomorpha</taxon>
        <taxon>Muroidea</taxon>
        <taxon>Muridae</taxon>
        <taxon>Murinae</taxon>
        <taxon>Rattus</taxon>
    </lineage>
</organism>
<gene>
    <name type="primary">Arhgef28</name>
    <name type="synonym">Rgnef</name>
</gene>
<feature type="chain" id="PRO_0000324120" description="Rho guanine nucleotide exchange factor 28">
    <location>
        <begin position="1"/>
        <end position="1700"/>
    </location>
</feature>
<feature type="domain" description="DH" evidence="5">
    <location>
        <begin position="848"/>
        <end position="1043"/>
    </location>
</feature>
<feature type="domain" description="PH" evidence="6">
    <location>
        <begin position="1085"/>
        <end position="1187"/>
    </location>
</feature>
<feature type="zinc finger region" description="Phorbol-ester/DAG-type" evidence="7">
    <location>
        <begin position="651"/>
        <end position="698"/>
    </location>
</feature>
<feature type="region of interest" description="Disordered" evidence="8">
    <location>
        <begin position="288"/>
        <end position="335"/>
    </location>
</feature>
<feature type="region of interest" description="Disordered" evidence="8">
    <location>
        <begin position="483"/>
        <end position="525"/>
    </location>
</feature>
<feature type="region of interest" description="Disordered" evidence="8">
    <location>
        <begin position="709"/>
        <end position="761"/>
    </location>
</feature>
<feature type="region of interest" description="Disordered" evidence="8">
    <location>
        <begin position="774"/>
        <end position="799"/>
    </location>
</feature>
<feature type="region of interest" description="Disordered" evidence="8">
    <location>
        <begin position="1186"/>
        <end position="1207"/>
    </location>
</feature>
<feature type="region of interest" description="Interaction with PTK2/FAK1; required for regulation of axonal branching and synapse formation" evidence="1">
    <location>
        <begin position="1294"/>
        <end position="1303"/>
    </location>
</feature>
<feature type="region of interest" description="Mediates cytoplasmic retention and interaction with YWHAH" evidence="1">
    <location>
        <begin position="1369"/>
        <end position="1380"/>
    </location>
</feature>
<feature type="region of interest" description="Interaction with microtubules" evidence="1">
    <location>
        <begin position="1421"/>
        <end position="1700"/>
    </location>
</feature>
<feature type="region of interest" description="RNA-binding">
    <location>
        <begin position="1493"/>
        <end position="1524"/>
    </location>
</feature>
<feature type="region of interest" description="Mediates cytoplasmic retention and interaction with MAPK8IP1" evidence="1">
    <location>
        <begin position="1563"/>
        <end position="1576"/>
    </location>
</feature>
<feature type="region of interest" description="Disordered" evidence="8">
    <location>
        <begin position="1574"/>
        <end position="1598"/>
    </location>
</feature>
<feature type="region of interest" description="Disordered" evidence="8">
    <location>
        <begin position="1612"/>
        <end position="1700"/>
    </location>
</feature>
<feature type="coiled-coil region" evidence="4">
    <location>
        <begin position="1473"/>
        <end position="1522"/>
    </location>
</feature>
<feature type="compositionally biased region" description="Polar residues" evidence="8">
    <location>
        <begin position="709"/>
        <end position="720"/>
    </location>
</feature>
<feature type="compositionally biased region" description="Low complexity" evidence="8">
    <location>
        <begin position="728"/>
        <end position="737"/>
    </location>
</feature>
<feature type="compositionally biased region" description="Polar residues" evidence="8">
    <location>
        <begin position="774"/>
        <end position="783"/>
    </location>
</feature>
<feature type="compositionally biased region" description="Basic and acidic residues" evidence="8">
    <location>
        <begin position="1193"/>
        <end position="1207"/>
    </location>
</feature>
<feature type="compositionally biased region" description="Polar residues" evidence="8">
    <location>
        <begin position="1613"/>
        <end position="1623"/>
    </location>
</feature>
<feature type="compositionally biased region" description="Basic and acidic residues" evidence="8">
    <location>
        <begin position="1633"/>
        <end position="1642"/>
    </location>
</feature>
<feature type="compositionally biased region" description="Polar residues" evidence="8">
    <location>
        <begin position="1647"/>
        <end position="1672"/>
    </location>
</feature>
<feature type="modified residue" description="Phosphoserine" evidence="11">
    <location>
        <position position="312"/>
    </location>
</feature>
<feature type="modified residue" description="Phosphoserine" evidence="11">
    <location>
        <position position="314"/>
    </location>
</feature>
<feature type="modified residue" description="Phosphoserine" evidence="11">
    <location>
        <position position="478"/>
    </location>
</feature>
<feature type="modified residue" description="Phosphoserine" evidence="3">
    <location>
        <position position="623"/>
    </location>
</feature>
<feature type="modified residue" description="Phosphoserine" evidence="3">
    <location>
        <position position="1535"/>
    </location>
</feature>
<feature type="modified residue" description="Phosphoserine" evidence="2">
    <location>
        <position position="1604"/>
    </location>
</feature>
<evidence type="ECO:0000250" key="1"/>
<evidence type="ECO:0000250" key="2">
    <source>
        <dbReference type="UniProtKB" id="P97433"/>
    </source>
</evidence>
<evidence type="ECO:0000250" key="3">
    <source>
        <dbReference type="UniProtKB" id="Q8N1W1"/>
    </source>
</evidence>
<evidence type="ECO:0000255" key="4"/>
<evidence type="ECO:0000255" key="5">
    <source>
        <dbReference type="PROSITE-ProRule" id="PRU00062"/>
    </source>
</evidence>
<evidence type="ECO:0000255" key="6">
    <source>
        <dbReference type="PROSITE-ProRule" id="PRU00145"/>
    </source>
</evidence>
<evidence type="ECO:0000255" key="7">
    <source>
        <dbReference type="PROSITE-ProRule" id="PRU00226"/>
    </source>
</evidence>
<evidence type="ECO:0000256" key="8">
    <source>
        <dbReference type="SAM" id="MobiDB-lite"/>
    </source>
</evidence>
<evidence type="ECO:0000269" key="9">
    <source>
    </source>
</evidence>
<evidence type="ECO:0000269" key="10">
    <source>
    </source>
</evidence>
<evidence type="ECO:0007744" key="11">
    <source>
    </source>
</evidence>
<accession>P0C6P5</accession>